<dbReference type="EC" id="2.7.7.49"/>
<dbReference type="EMBL" id="M22874">
    <property type="protein sequence ID" value="AAA28675.1"/>
    <property type="molecule type" value="Genomic_DNA"/>
</dbReference>
<dbReference type="EMBL" id="M38643">
    <property type="protein sequence ID" value="AAA28940.1"/>
    <property type="molecule type" value="Genomic_DNA"/>
</dbReference>
<dbReference type="PIR" id="JT0396">
    <property type="entry name" value="JT0396"/>
</dbReference>
<dbReference type="SMR" id="P21328"/>
<dbReference type="FlyBase" id="FBgn0015952">
    <property type="gene designation" value="jockey\pol"/>
</dbReference>
<dbReference type="PRO" id="PR:P21328"/>
<dbReference type="GO" id="GO:0003964">
    <property type="term" value="F:RNA-directed DNA polymerase activity"/>
    <property type="evidence" value="ECO:0007669"/>
    <property type="project" value="UniProtKB-KW"/>
</dbReference>
<dbReference type="CDD" id="cd01650">
    <property type="entry name" value="RT_nLTR_like"/>
    <property type="match status" value="1"/>
</dbReference>
<dbReference type="Gene3D" id="3.60.10.10">
    <property type="entry name" value="Endonuclease/exonuclease/phosphatase"/>
    <property type="match status" value="1"/>
</dbReference>
<dbReference type="InterPro" id="IPR043502">
    <property type="entry name" value="DNA/RNA_pol_sf"/>
</dbReference>
<dbReference type="InterPro" id="IPR036691">
    <property type="entry name" value="Endo/exonu/phosph_ase_sf"/>
</dbReference>
<dbReference type="InterPro" id="IPR005135">
    <property type="entry name" value="Endo/exonuclease/phosphatase"/>
</dbReference>
<dbReference type="InterPro" id="IPR052560">
    <property type="entry name" value="RdDP_mobile_element"/>
</dbReference>
<dbReference type="InterPro" id="IPR000477">
    <property type="entry name" value="RT_dom"/>
</dbReference>
<dbReference type="PANTHER" id="PTHR36688">
    <property type="entry name" value="ENDO/EXONUCLEASE/PHOSPHATASE DOMAIN-CONTAINING PROTEIN"/>
    <property type="match status" value="1"/>
</dbReference>
<dbReference type="PANTHER" id="PTHR36688:SF2">
    <property type="entry name" value="ENDONUCLEASE_EXONUCLEASE_PHOSPHATASE DOMAIN-CONTAINING PROTEIN"/>
    <property type="match status" value="1"/>
</dbReference>
<dbReference type="Pfam" id="PF03372">
    <property type="entry name" value="Exo_endo_phos"/>
    <property type="match status" value="1"/>
</dbReference>
<dbReference type="Pfam" id="PF00078">
    <property type="entry name" value="RVT_1"/>
    <property type="match status" value="1"/>
</dbReference>
<dbReference type="SUPFAM" id="SSF56672">
    <property type="entry name" value="DNA/RNA polymerases"/>
    <property type="match status" value="1"/>
</dbReference>
<dbReference type="SUPFAM" id="SSF56219">
    <property type="entry name" value="DNase I-like"/>
    <property type="match status" value="1"/>
</dbReference>
<dbReference type="PROSITE" id="PS50878">
    <property type="entry name" value="RT_POL"/>
    <property type="match status" value="1"/>
</dbReference>
<sequence length="916" mass="103431">MTQPTLKIGLWNARGLTRGSEELRIFLSDHDIDVMLTTETHMRVGQRIYLPGYLMYHAHHPSGNSRGGSAVIIKSRLCHSPLTPISTNDRQIARVHLQTSVGTVTVAAVYLPPAERWIVDDFKSMFAALGNKFIAGGDYNAKHAWWGNPRSCPRGKMLQEVIAHGQYQVLATGEPTFYSYNPLLTPSALDFFITCGYGMGRLDVQTLQELSSDHLPILAVLHATPLKKPQRVRLLAHNADINIFKTHLEQLSEVNMQILEAVDIDNATSLFMSKLSEAAQLAAPRNRHEVEAFRPLQLPSSILALLRLKRRVRKEYARTGDPRMQQIHSRLANCLHKALARRKQAQIDTFLDNLGADASTNYSLWRITKRFKAQPTPKSAIKNPSGGWCRTSLEKTEVFANNLEQRFTPYNYAPESLCRQVEEYLESPFQMSLPLSAVTLEEVKNLIAKLPLKKAPGEDLLDNRTIRLLPDQALQFLALIFNSVLDVGYFPKAWKSASIIMIHKTGKTPTDVDSYRPTSLLPSLGKIMERLILNRLLTCKDVTKAIPKFQFGFRLQHGTPEQLHRVVNFALEAMENKEYAVGAFLDIQQAFDRVWHPGLLYKAKRLFPPQLYLVVKSFLEERTFHVSVDGYKSSIKPIAAGVPQGSVLGPTLYSVFASDMPTHTPVTEVDEEDVLIATYADDTAVLTKSKSILAATSGLQEYLDAFQQWAENWNVRINAEKCANVTFANRTGSCPGVSLNGRLIRHHQAYKYLGITLDRKLTFSRHITNIQQAFRTKVARMSWLIAPRNKLSLGCKVNIYKSILAPCLFYGLQVYGIAAKSHLNKIRILQAKTLRRISGAPWYMRTRDIERDLKVPKLGDKLQNIAQKYMERLNVHPNSLARKLGTAAVVNADPRTRVKRRLKRHHPHDLPNLVLT</sequence>
<gene>
    <name type="primary">pol</name>
</gene>
<evidence type="ECO:0000255" key="1">
    <source>
        <dbReference type="PROSITE-ProRule" id="PRU00405"/>
    </source>
</evidence>
<evidence type="ECO:0000305" key="2"/>
<comment type="catalytic activity">
    <reaction evidence="1">
        <text>DNA(n) + a 2'-deoxyribonucleoside 5'-triphosphate = DNA(n+1) + diphosphate</text>
        <dbReference type="Rhea" id="RHEA:22508"/>
        <dbReference type="Rhea" id="RHEA-COMP:17339"/>
        <dbReference type="Rhea" id="RHEA-COMP:17340"/>
        <dbReference type="ChEBI" id="CHEBI:33019"/>
        <dbReference type="ChEBI" id="CHEBI:61560"/>
        <dbReference type="ChEBI" id="CHEBI:173112"/>
        <dbReference type="EC" id="2.7.7.49"/>
    </reaction>
</comment>
<comment type="cofactor">
    <cofactor>
        <name>Mg(2+)</name>
        <dbReference type="ChEBI" id="CHEBI:18420"/>
    </cofactor>
</comment>
<comment type="cofactor">
    <cofactor>
        <name>Mn(2+)</name>
        <dbReference type="ChEBI" id="CHEBI:29035"/>
    </cofactor>
</comment>
<comment type="activity regulation">
    <text>Inactivated by sulphydryl reagent.</text>
</comment>
<comment type="biophysicochemical properties">
    <temperatureDependence>
        <text>Optimum temperature is 26 degrees Celsius.</text>
    </temperatureDependence>
</comment>
<comment type="miscellaneous">
    <text>Prefers poly(rC) and poly(rA) as template and activated DNA is not effective.</text>
</comment>
<reference key="1">
    <citation type="journal article" date="1988" name="Gene">
        <title>The Drosophila mobile element jockey belongs to LINEs and contains coding sequences homologous to some retroviral proteins.</title>
        <authorList>
            <person name="Priimaegi A.F."/>
            <person name="Mizrokhi L.J."/>
            <person name="Ilyin Y.V."/>
        </authorList>
    </citation>
    <scope>NUCLEOTIDE SEQUENCE [GENOMIC DNA]</scope>
</reference>
<reference key="2">
    <citation type="journal article" date="1987" name="Dokl. Akad. Nauk SSSR">
        <title>Drosophila mobile element jockey is a retroposon and encodes the GAG-specific protein sequence characteristic for retroviruses.</title>
        <authorList>
            <person name="Mizrokhi L.J."/>
            <person name="Priimaegi A.F."/>
            <person name="Ilyin Y.V."/>
        </authorList>
    </citation>
    <scope>NUCLEOTIDE SEQUENCE [GENOMIC DNA] OF 1-191</scope>
</reference>
<reference key="3">
    <citation type="journal article" date="1991" name="EMBO J.">
        <title>Authentic reverse transcriptase is coded by jockey, a mobile Drosophila element related to mammalian LINEs.</title>
        <authorList>
            <person name="Ivanov V.A."/>
            <person name="Melnikov A.A."/>
            <person name="Siunov A.V."/>
            <person name="Fodor I.I."/>
            <person name="Ilyin Y.V."/>
        </authorList>
    </citation>
    <scope>CHARACTERIZATION</scope>
</reference>
<keyword id="KW-0548">Nucleotidyltransferase</keyword>
<keyword id="KW-0695">RNA-directed DNA polymerase</keyword>
<keyword id="KW-0808">Transferase</keyword>
<keyword id="KW-0814">Transposable element</keyword>
<protein>
    <recommendedName>
        <fullName>RNA-directed DNA polymerase from mobile element jockey</fullName>
        <ecNumber>2.7.7.49</ecNumber>
    </recommendedName>
    <alternativeName>
        <fullName>Reverse transcriptase</fullName>
    </alternativeName>
</protein>
<accession>P21328</accession>
<feature type="chain" id="PRO_0000097514" description="RNA-directed DNA polymerase from mobile element jockey">
    <location>
        <begin position="1"/>
        <end position="916"/>
    </location>
</feature>
<feature type="domain" description="Reverse transcriptase" evidence="1">
    <location>
        <begin position="483"/>
        <end position="757"/>
    </location>
</feature>
<feature type="sequence conflict" description="In Ref. 2." evidence="2" ref="2">
    <original>TPSALDF</original>
    <variation>LKFIRII</variation>
    <location>
        <begin position="185"/>
        <end position="191"/>
    </location>
</feature>
<name>RTJK_DROME</name>
<proteinExistence type="evidence at protein level"/>
<organism>
    <name type="scientific">Drosophila melanogaster</name>
    <name type="common">Fruit fly</name>
    <dbReference type="NCBI Taxonomy" id="7227"/>
    <lineage>
        <taxon>Eukaryota</taxon>
        <taxon>Metazoa</taxon>
        <taxon>Ecdysozoa</taxon>
        <taxon>Arthropoda</taxon>
        <taxon>Hexapoda</taxon>
        <taxon>Insecta</taxon>
        <taxon>Pterygota</taxon>
        <taxon>Neoptera</taxon>
        <taxon>Endopterygota</taxon>
        <taxon>Diptera</taxon>
        <taxon>Brachycera</taxon>
        <taxon>Muscomorpha</taxon>
        <taxon>Ephydroidea</taxon>
        <taxon>Drosophilidae</taxon>
        <taxon>Drosophila</taxon>
        <taxon>Sophophora</taxon>
    </lineage>
</organism>